<protein>
    <recommendedName>
        <fullName evidence="1">GTP cyclohydrolase FolE2</fullName>
        <ecNumber evidence="1">3.5.4.16</ecNumber>
    </recommendedName>
</protein>
<dbReference type="EC" id="3.5.4.16" evidence="1"/>
<dbReference type="EMBL" id="CP000698">
    <property type="protein sequence ID" value="ABQ28189.1"/>
    <property type="status" value="ALT_INIT"/>
    <property type="molecule type" value="Genomic_DNA"/>
</dbReference>
<dbReference type="RefSeq" id="WP_011940826.1">
    <property type="nucleotide sequence ID" value="NC_009483.1"/>
</dbReference>
<dbReference type="SMR" id="A5G8S1"/>
<dbReference type="STRING" id="351605.Gura_4045"/>
<dbReference type="KEGG" id="gur:Gura_4045"/>
<dbReference type="HOGENOM" id="CLU_062816_1_1_7"/>
<dbReference type="OrthoDB" id="9774824at2"/>
<dbReference type="UniPathway" id="UPA00848">
    <property type="reaction ID" value="UER00151"/>
</dbReference>
<dbReference type="Proteomes" id="UP000006695">
    <property type="component" value="Chromosome"/>
</dbReference>
<dbReference type="GO" id="GO:0003934">
    <property type="term" value="F:GTP cyclohydrolase I activity"/>
    <property type="evidence" value="ECO:0007669"/>
    <property type="project" value="UniProtKB-UniRule"/>
</dbReference>
<dbReference type="GO" id="GO:0046654">
    <property type="term" value="P:tetrahydrofolate biosynthetic process"/>
    <property type="evidence" value="ECO:0007669"/>
    <property type="project" value="UniProtKB-UniRule"/>
</dbReference>
<dbReference type="Gene3D" id="3.10.270.10">
    <property type="entry name" value="Urate Oxidase"/>
    <property type="match status" value="1"/>
</dbReference>
<dbReference type="HAMAP" id="MF_01527_B">
    <property type="entry name" value="GTP_cyclohydrol_B"/>
    <property type="match status" value="1"/>
</dbReference>
<dbReference type="InterPro" id="IPR022838">
    <property type="entry name" value="GTP_cyclohydrolase_FolE2"/>
</dbReference>
<dbReference type="InterPro" id="IPR003801">
    <property type="entry name" value="GTP_cyclohydrolase_FolE2/MptA"/>
</dbReference>
<dbReference type="NCBIfam" id="NF010200">
    <property type="entry name" value="PRK13674.1-1"/>
    <property type="match status" value="1"/>
</dbReference>
<dbReference type="PANTHER" id="PTHR36445">
    <property type="entry name" value="GTP CYCLOHYDROLASE MPTA"/>
    <property type="match status" value="1"/>
</dbReference>
<dbReference type="PANTHER" id="PTHR36445:SF1">
    <property type="entry name" value="GTP CYCLOHYDROLASE MPTA"/>
    <property type="match status" value="1"/>
</dbReference>
<dbReference type="Pfam" id="PF02649">
    <property type="entry name" value="GCHY-1"/>
    <property type="match status" value="1"/>
</dbReference>
<evidence type="ECO:0000255" key="1">
    <source>
        <dbReference type="HAMAP-Rule" id="MF_01527"/>
    </source>
</evidence>
<evidence type="ECO:0000305" key="2"/>
<organism>
    <name type="scientific">Geotalea uraniireducens (strain Rf4)</name>
    <name type="common">Geobacter uraniireducens</name>
    <dbReference type="NCBI Taxonomy" id="351605"/>
    <lineage>
        <taxon>Bacteria</taxon>
        <taxon>Pseudomonadati</taxon>
        <taxon>Thermodesulfobacteriota</taxon>
        <taxon>Desulfuromonadia</taxon>
        <taxon>Geobacterales</taxon>
        <taxon>Geobacteraceae</taxon>
        <taxon>Geotalea</taxon>
    </lineage>
</organism>
<comment type="function">
    <text evidence="1">Converts GTP to 7,8-dihydroneopterin triphosphate.</text>
</comment>
<comment type="catalytic activity">
    <reaction evidence="1">
        <text>GTP + H2O = 7,8-dihydroneopterin 3'-triphosphate + formate + H(+)</text>
        <dbReference type="Rhea" id="RHEA:17473"/>
        <dbReference type="ChEBI" id="CHEBI:15377"/>
        <dbReference type="ChEBI" id="CHEBI:15378"/>
        <dbReference type="ChEBI" id="CHEBI:15740"/>
        <dbReference type="ChEBI" id="CHEBI:37565"/>
        <dbReference type="ChEBI" id="CHEBI:58462"/>
        <dbReference type="EC" id="3.5.4.16"/>
    </reaction>
</comment>
<comment type="pathway">
    <text evidence="1">Cofactor biosynthesis; 7,8-dihydroneopterin triphosphate biosynthesis; 7,8-dihydroneopterin triphosphate from GTP: step 1/1.</text>
</comment>
<comment type="similarity">
    <text evidence="1">Belongs to the GTP cyclohydrolase IV family.</text>
</comment>
<comment type="sequence caution" evidence="2">
    <conflict type="erroneous initiation">
        <sequence resource="EMBL-CDS" id="ABQ28189"/>
    </conflict>
</comment>
<sequence length="271" mass="31024">MSDVQKSRDTRNIPISKVGVKDISYPIVIMDKNKSIQHTVARINMYVDLPHHFKGTHMSRFIEILNVYREKIALDNMEAMLQRMKEKLGAGSAHVEIEFPYFIEKKAPASGAKSLMEYTCEFSASLSSEFDFILGIKVPVTSLCPCSKELSHYGAHNQRSIMTVRVRYREFVWIEDLIEIVEGCGSSPVYSLLKREDEKFVTEKAYENPKFVEDMVREATQKLLAMEKITWFSVEAENFESIHNHSAYAAIERDKREKGVDNPVDKPGNCG</sequence>
<reference key="1">
    <citation type="submission" date="2007-05" db="EMBL/GenBank/DDBJ databases">
        <title>Complete sequence of Geobacter uraniireducens Rf4.</title>
        <authorList>
            <consortium name="US DOE Joint Genome Institute"/>
            <person name="Copeland A."/>
            <person name="Lucas S."/>
            <person name="Lapidus A."/>
            <person name="Barry K."/>
            <person name="Detter J.C."/>
            <person name="Glavina del Rio T."/>
            <person name="Hammon N."/>
            <person name="Israni S."/>
            <person name="Dalin E."/>
            <person name="Tice H."/>
            <person name="Pitluck S."/>
            <person name="Chertkov O."/>
            <person name="Brettin T."/>
            <person name="Bruce D."/>
            <person name="Han C."/>
            <person name="Schmutz J."/>
            <person name="Larimer F."/>
            <person name="Land M."/>
            <person name="Hauser L."/>
            <person name="Kyrpides N."/>
            <person name="Mikhailova N."/>
            <person name="Shelobolina E."/>
            <person name="Aklujkar M."/>
            <person name="Lovley D."/>
            <person name="Richardson P."/>
        </authorList>
    </citation>
    <scope>NUCLEOTIDE SEQUENCE [LARGE SCALE GENOMIC DNA]</scope>
    <source>
        <strain>ATCC BAA-1134 / JCM 13001 / Rf4</strain>
    </source>
</reference>
<name>GCH4_GEOUR</name>
<accession>A5G8S1</accession>
<proteinExistence type="inferred from homology"/>
<feature type="chain" id="PRO_0000372030" description="GTP cyclohydrolase FolE2">
    <location>
        <begin position="1"/>
        <end position="271"/>
    </location>
</feature>
<feature type="site" description="May be catalytically important" evidence="1">
    <location>
        <position position="144"/>
    </location>
</feature>
<keyword id="KW-0378">Hydrolase</keyword>
<keyword id="KW-1185">Reference proteome</keyword>
<gene>
    <name evidence="1" type="primary">folE2</name>
    <name type="ordered locus">Gura_4045</name>
</gene>